<feature type="chain" id="PRO_0000384015" description="Lactate utilization protein C">
    <location>
        <begin position="1"/>
        <end position="233"/>
    </location>
</feature>
<evidence type="ECO:0000255" key="1">
    <source>
        <dbReference type="HAMAP-Rule" id="MF_02104"/>
    </source>
</evidence>
<organism>
    <name type="scientific">Oceanobacillus iheyensis (strain DSM 14371 / CIP 107618 / JCM 11309 / KCTC 3954 / HTE831)</name>
    <dbReference type="NCBI Taxonomy" id="221109"/>
    <lineage>
        <taxon>Bacteria</taxon>
        <taxon>Bacillati</taxon>
        <taxon>Bacillota</taxon>
        <taxon>Bacilli</taxon>
        <taxon>Bacillales</taxon>
        <taxon>Bacillaceae</taxon>
        <taxon>Oceanobacillus</taxon>
    </lineage>
</organism>
<keyword id="KW-1185">Reference proteome</keyword>
<sequence length="233" mass="25993">MAIHNRDKFLSNLAANLGRPRKTEGVERPEYSVQPQYEVLKGASQDELIDVLEKHCEVIHTDFVRTSKQELPHVVRQTIERYEAKSIIASNDKRNAEYGMDQAYNQFAEELDMHIWDASIGKENQVIAEKADVGISFSDITLAESGTVTLKNDKDNGRSISLMPKSYIAIIPKETLVPRMTQAAKQIHDDHMNGIQTPSSVCFVTGPSNSADIEMNLIVGVHGPVNVTYIVVD</sequence>
<reference key="1">
    <citation type="journal article" date="2002" name="Nucleic Acids Res.">
        <title>Genome sequence of Oceanobacillus iheyensis isolated from the Iheya Ridge and its unexpected adaptive capabilities to extreme environments.</title>
        <authorList>
            <person name="Takami H."/>
            <person name="Takaki Y."/>
            <person name="Uchiyama I."/>
        </authorList>
    </citation>
    <scope>NUCLEOTIDE SEQUENCE [LARGE SCALE GENOMIC DNA]</scope>
    <source>
        <strain>DSM 14371 / CIP 107618 / JCM 11309 / KCTC 3954 / HTE831</strain>
    </source>
</reference>
<proteinExistence type="inferred from homology"/>
<comment type="function">
    <text evidence="1">Is involved in L-lactate degradation and allows cells to grow with lactate as the sole carbon source.</text>
</comment>
<comment type="similarity">
    <text evidence="1">Belongs to the LutC/YkgG family.</text>
</comment>
<protein>
    <recommendedName>
        <fullName evidence="1">Lactate utilization protein C</fullName>
    </recommendedName>
</protein>
<name>LUTC_OCEIH</name>
<gene>
    <name evidence="1" type="primary">lutC</name>
    <name type="ordered locus">OB0372</name>
</gene>
<accession>Q8ET90</accession>
<dbReference type="EMBL" id="BA000028">
    <property type="protein sequence ID" value="BAC12328.1"/>
    <property type="molecule type" value="Genomic_DNA"/>
</dbReference>
<dbReference type="RefSeq" id="WP_011064777.1">
    <property type="nucleotide sequence ID" value="NC_004193.1"/>
</dbReference>
<dbReference type="SMR" id="Q8ET90"/>
<dbReference type="STRING" id="221109.gene:10732575"/>
<dbReference type="KEGG" id="oih:OB0372"/>
<dbReference type="eggNOG" id="COG1556">
    <property type="taxonomic scope" value="Bacteria"/>
</dbReference>
<dbReference type="HOGENOM" id="CLU_090664_1_0_9"/>
<dbReference type="OrthoDB" id="9794157at2"/>
<dbReference type="PhylomeDB" id="Q8ET90"/>
<dbReference type="Proteomes" id="UP000000822">
    <property type="component" value="Chromosome"/>
</dbReference>
<dbReference type="GO" id="GO:0006089">
    <property type="term" value="P:lactate metabolic process"/>
    <property type="evidence" value="ECO:0007669"/>
    <property type="project" value="UniProtKB-UniRule"/>
</dbReference>
<dbReference type="Gene3D" id="3.40.50.10420">
    <property type="entry name" value="NagB/RpiA/CoA transferase-like"/>
    <property type="match status" value="1"/>
</dbReference>
<dbReference type="HAMAP" id="MF_02104">
    <property type="entry name" value="LutC"/>
    <property type="match status" value="1"/>
</dbReference>
<dbReference type="InterPro" id="IPR024185">
    <property type="entry name" value="FTHF_cligase-like_sf"/>
</dbReference>
<dbReference type="InterPro" id="IPR003741">
    <property type="entry name" value="LUD_dom"/>
</dbReference>
<dbReference type="InterPro" id="IPR022823">
    <property type="entry name" value="LutC"/>
</dbReference>
<dbReference type="InterPro" id="IPR037171">
    <property type="entry name" value="NagB/RpiA_transferase-like"/>
</dbReference>
<dbReference type="PANTHER" id="PTHR43682">
    <property type="entry name" value="LACTATE UTILIZATION PROTEIN C"/>
    <property type="match status" value="1"/>
</dbReference>
<dbReference type="PANTHER" id="PTHR43682:SF1">
    <property type="entry name" value="LACTATE UTILIZATION PROTEIN C"/>
    <property type="match status" value="1"/>
</dbReference>
<dbReference type="Pfam" id="PF02589">
    <property type="entry name" value="LUD_dom"/>
    <property type="match status" value="1"/>
</dbReference>
<dbReference type="SUPFAM" id="SSF100950">
    <property type="entry name" value="NagB/RpiA/CoA transferase-like"/>
    <property type="match status" value="1"/>
</dbReference>